<protein>
    <recommendedName>
        <fullName evidence="1">Large ribosomal subunit protein bL34</fullName>
    </recommendedName>
    <alternativeName>
        <fullName evidence="2">50S ribosomal protein L34</fullName>
    </alternativeName>
</protein>
<sequence>MKRTYQPSVTRRKRTHGFRVRMKTRAGRAILNARRAKGRKRLAV</sequence>
<comment type="similarity">
    <text evidence="1">Belongs to the bacterial ribosomal protein bL34 family.</text>
</comment>
<feature type="chain" id="PRO_0000187350" description="Large ribosomal subunit protein bL34">
    <location>
        <begin position="1"/>
        <end position="44"/>
    </location>
</feature>
<dbReference type="EMBL" id="BX640412">
    <property type="protein sequence ID" value="CAE44821.1"/>
    <property type="molecule type" value="Genomic_DNA"/>
</dbReference>
<dbReference type="RefSeq" id="NP_879345.1">
    <property type="nucleotide sequence ID" value="NC_002929.2"/>
</dbReference>
<dbReference type="RefSeq" id="WP_003816025.1">
    <property type="nucleotide sequence ID" value="NZ_CP039022.1"/>
</dbReference>
<dbReference type="SMR" id="Q7VSD9"/>
<dbReference type="STRING" id="257313.BP0492"/>
<dbReference type="PaxDb" id="257313-BP0492"/>
<dbReference type="GeneID" id="94355904"/>
<dbReference type="KEGG" id="bpe:BP0492"/>
<dbReference type="PATRIC" id="fig|257313.5.peg.529"/>
<dbReference type="eggNOG" id="COG0230">
    <property type="taxonomic scope" value="Bacteria"/>
</dbReference>
<dbReference type="HOGENOM" id="CLU_129938_2_0_4"/>
<dbReference type="PRO" id="PR:Q7VSD9"/>
<dbReference type="Proteomes" id="UP000002676">
    <property type="component" value="Chromosome"/>
</dbReference>
<dbReference type="GO" id="GO:1990904">
    <property type="term" value="C:ribonucleoprotein complex"/>
    <property type="evidence" value="ECO:0007669"/>
    <property type="project" value="UniProtKB-KW"/>
</dbReference>
<dbReference type="GO" id="GO:0005840">
    <property type="term" value="C:ribosome"/>
    <property type="evidence" value="ECO:0007669"/>
    <property type="project" value="UniProtKB-KW"/>
</dbReference>
<dbReference type="GO" id="GO:0003735">
    <property type="term" value="F:structural constituent of ribosome"/>
    <property type="evidence" value="ECO:0007669"/>
    <property type="project" value="InterPro"/>
</dbReference>
<dbReference type="GO" id="GO:0006412">
    <property type="term" value="P:translation"/>
    <property type="evidence" value="ECO:0007669"/>
    <property type="project" value="UniProtKB-UniRule"/>
</dbReference>
<dbReference type="FunFam" id="1.10.287.3980:FF:000001">
    <property type="entry name" value="Mitochondrial ribosomal protein L34"/>
    <property type="match status" value="1"/>
</dbReference>
<dbReference type="Gene3D" id="1.10.287.3980">
    <property type="match status" value="1"/>
</dbReference>
<dbReference type="HAMAP" id="MF_00391">
    <property type="entry name" value="Ribosomal_bL34"/>
    <property type="match status" value="1"/>
</dbReference>
<dbReference type="InterPro" id="IPR000271">
    <property type="entry name" value="Ribosomal_bL34"/>
</dbReference>
<dbReference type="InterPro" id="IPR020939">
    <property type="entry name" value="Ribosomal_bL34_CS"/>
</dbReference>
<dbReference type="NCBIfam" id="TIGR01030">
    <property type="entry name" value="rpmH_bact"/>
    <property type="match status" value="1"/>
</dbReference>
<dbReference type="PANTHER" id="PTHR14503:SF4">
    <property type="entry name" value="LARGE RIBOSOMAL SUBUNIT PROTEIN BL34M"/>
    <property type="match status" value="1"/>
</dbReference>
<dbReference type="PANTHER" id="PTHR14503">
    <property type="entry name" value="MITOCHONDRIAL RIBOSOMAL PROTEIN 34 FAMILY MEMBER"/>
    <property type="match status" value="1"/>
</dbReference>
<dbReference type="Pfam" id="PF00468">
    <property type="entry name" value="Ribosomal_L34"/>
    <property type="match status" value="1"/>
</dbReference>
<dbReference type="PROSITE" id="PS00784">
    <property type="entry name" value="RIBOSOMAL_L34"/>
    <property type="match status" value="1"/>
</dbReference>
<organism>
    <name type="scientific">Bordetella pertussis (strain Tohama I / ATCC BAA-589 / NCTC 13251)</name>
    <dbReference type="NCBI Taxonomy" id="257313"/>
    <lineage>
        <taxon>Bacteria</taxon>
        <taxon>Pseudomonadati</taxon>
        <taxon>Pseudomonadota</taxon>
        <taxon>Betaproteobacteria</taxon>
        <taxon>Burkholderiales</taxon>
        <taxon>Alcaligenaceae</taxon>
        <taxon>Bordetella</taxon>
    </lineage>
</organism>
<accession>Q7VSD9</accession>
<gene>
    <name evidence="1" type="primary">rpmH</name>
    <name type="ordered locus">BP0492</name>
</gene>
<name>RL34_BORPE</name>
<keyword id="KW-1185">Reference proteome</keyword>
<keyword id="KW-0687">Ribonucleoprotein</keyword>
<keyword id="KW-0689">Ribosomal protein</keyword>
<reference key="1">
    <citation type="journal article" date="2003" name="Nat. Genet.">
        <title>Comparative analysis of the genome sequences of Bordetella pertussis, Bordetella parapertussis and Bordetella bronchiseptica.</title>
        <authorList>
            <person name="Parkhill J."/>
            <person name="Sebaihia M."/>
            <person name="Preston A."/>
            <person name="Murphy L.D."/>
            <person name="Thomson N.R."/>
            <person name="Harris D.E."/>
            <person name="Holden M.T.G."/>
            <person name="Churcher C.M."/>
            <person name="Bentley S.D."/>
            <person name="Mungall K.L."/>
            <person name="Cerdeno-Tarraga A.-M."/>
            <person name="Temple L."/>
            <person name="James K.D."/>
            <person name="Harris B."/>
            <person name="Quail M.A."/>
            <person name="Achtman M."/>
            <person name="Atkin R."/>
            <person name="Baker S."/>
            <person name="Basham D."/>
            <person name="Bason N."/>
            <person name="Cherevach I."/>
            <person name="Chillingworth T."/>
            <person name="Collins M."/>
            <person name="Cronin A."/>
            <person name="Davis P."/>
            <person name="Doggett J."/>
            <person name="Feltwell T."/>
            <person name="Goble A."/>
            <person name="Hamlin N."/>
            <person name="Hauser H."/>
            <person name="Holroyd S."/>
            <person name="Jagels K."/>
            <person name="Leather S."/>
            <person name="Moule S."/>
            <person name="Norberczak H."/>
            <person name="O'Neil S."/>
            <person name="Ormond D."/>
            <person name="Price C."/>
            <person name="Rabbinowitsch E."/>
            <person name="Rutter S."/>
            <person name="Sanders M."/>
            <person name="Saunders D."/>
            <person name="Seeger K."/>
            <person name="Sharp S."/>
            <person name="Simmonds M."/>
            <person name="Skelton J."/>
            <person name="Squares R."/>
            <person name="Squares S."/>
            <person name="Stevens K."/>
            <person name="Unwin L."/>
            <person name="Whitehead S."/>
            <person name="Barrell B.G."/>
            <person name="Maskell D.J."/>
        </authorList>
    </citation>
    <scope>NUCLEOTIDE SEQUENCE [LARGE SCALE GENOMIC DNA]</scope>
    <source>
        <strain>Tohama I / ATCC BAA-589 / NCTC 13251</strain>
    </source>
</reference>
<evidence type="ECO:0000255" key="1">
    <source>
        <dbReference type="HAMAP-Rule" id="MF_00391"/>
    </source>
</evidence>
<evidence type="ECO:0000305" key="2"/>
<proteinExistence type="inferred from homology"/>